<sequence length="317" mass="34310">MYNMMETELKPPGPQQTSGGGGGNSTAAAAGGNQKNSPDRVKRPMNAFMVWSRGQRRKMAQENPKMHNSEISKRLGAEWKLLSETEKRPFIDEAKRLRALHMKEHPDYKYRPRRKTKTLMKKDKYTLPGGLLAPGGNSMASGVGVGAGLGAGVNQRMDSYAHMNGWSNGSYSMMQDQLGYPQHPGLNAHGAAQMQPMHRYDVSALQYNSMTSSQTYMNGSPTYSMSYSQQGTPGMALGSMGSVVKSEASSSPPVVTSSSHSRAPCQAGDLRDMISMYLPGAEVPEPAAPSRLHMSQHYQSGPVPGTAINGTLPLSHM</sequence>
<gene>
    <name type="primary">SOX2</name>
</gene>
<comment type="function">
    <text evidence="3 4 10">Transcription factor that forms a trimeric complex with OCT4 on DNA and controls the expression of a number of genes involved in embryonic development such as YES1, FGF4, UTF1 and ZFP206 (By similarity). Binds to the proximal enhancer region of NANOG (By similarity). Critical for early embryogenesis and for embryonic stem cell pluripotency (PubMed:18035408). Downstream SRRT target that mediates the promotion of neural stem cell self-renewal (By similarity). Keeps neural cells undifferentiated by counteracting the activity of proneural proteins and suppresses neuronal differentiation (By similarity). May function as a switch in neuronal development (By similarity).</text>
</comment>
<comment type="subunit">
    <text evidence="4 12 14 15 16">Interacts with ZSCAN10 (By similarity). Interacts with SOX3 and FGFR1 (By similarity). Interacts with GLIS1 (PubMed:21654807). Interacts with POU5F1; binds synergistically with POU5F1 to DNA (By similarity). Interacts with DDX56 (By similarity). Interacts with L3MBTL3 and DCAF5; the interaction requires methylation at Lys-42 and is necessary to target SOX2 for ubiquitination by the CRL4-DCAF5 E3 ubiquitin ligase complex (PubMed:30442713). Interacts with RCOR1/CoREST (By similarity) (PubMed:30442713). Interacts with PHF20L1; the interaction requires methylation at Lys-42 and Lys-117 and protects SOX2 from degradation (PubMed:29358331). Interacts with TRIM26; this interaction prevents ubiquitination by WWP2 (PubMed:34732716).</text>
</comment>
<comment type="interaction">
    <interactant intactId="EBI-6124081">
        <id>P48431</id>
    </interactant>
    <interactant intactId="EBI-1783068">
        <id>O95983</id>
        <label>MBD3</label>
    </interactant>
    <organismsDiffer>false</organismsDiffer>
    <experiments>3</experiments>
</comment>
<comment type="interaction">
    <interactant intactId="EBI-6124081">
        <id>P48431</id>
    </interactant>
    <interactant intactId="EBI-475687">
        <id>Q01860</id>
        <label>POU5F1</label>
    </interactant>
    <organismsDiffer>false</organismsDiffer>
    <experiments>2</experiments>
</comment>
<comment type="interaction">
    <interactant intactId="EBI-6124081">
        <id>P48431</id>
    </interactant>
    <interactant intactId="EBI-286199">
        <id>P41743</id>
        <label>PRKCI</label>
    </interactant>
    <organismsDiffer>false</organismsDiffer>
    <experiments>2</experiments>
</comment>
<comment type="interaction">
    <interactant intactId="EBI-6124081">
        <id>P48431</id>
    </interactant>
    <interactant intactId="EBI-80140">
        <id>P63165</id>
        <label>SUMO1</label>
    </interactant>
    <organismsDiffer>false</organismsDiffer>
    <experiments>4</experiments>
</comment>
<comment type="interaction">
    <interactant intactId="EBI-6124081">
        <id>P48431</id>
    </interactant>
    <interactant intactId="EBI-302474">
        <id>Q93009</id>
        <label>USP7</label>
    </interactant>
    <organismsDiffer>false</organismsDiffer>
    <experiments>3</experiments>
</comment>
<comment type="interaction">
    <interactant intactId="EBI-6124081">
        <id>P48431</id>
    </interactant>
    <interactant intactId="EBI-1769146">
        <id>Q99986</id>
        <label>VRK1</label>
    </interactant>
    <organismsDiffer>false</organismsDiffer>
    <experiments>14</experiments>
</comment>
<comment type="subcellular location">
    <subcellularLocation>
        <location evidence="5">Nucleus speckle</location>
    </subcellularLocation>
    <subcellularLocation>
        <location evidence="6">Cytoplasm</location>
    </subcellularLocation>
    <subcellularLocation>
        <location evidence="6">Nucleus</location>
    </subcellularLocation>
    <text evidence="5 6">Acetylation contributes to its nuclear localization and deacetylation by HDAC3 induces a cytoplasmic delocalization (By similarity). Colocalizes in the nucleus with ZNF208 isoform KRAB-O and tyrosine hydroxylase (TH) (By similarity). Colocalizes with SOX6 in speckles. Colocalizes with CAML in the nucleus (By similarity). Nuclear import is facilitated by XPO4, a protein that usually acts as a nuclear export signal receptor (By similarity).</text>
</comment>
<comment type="domain">
    <text evidence="2">The 9aaTAD motif is a transactivation domain present in a large number of yeast and animal transcription factors.</text>
</comment>
<comment type="PTM">
    <text evidence="1">Sumoylation inhibits binding on DNA and negatively regulates the FGF4 transactivation.</text>
</comment>
<comment type="PTM">
    <text evidence="14 15">Methylation at Lys-42 and Lys-117 is necessary for the regulation of SOX2 proteasomal degradation.</text>
</comment>
<comment type="PTM">
    <text evidence="16">Ubiquitinated by WWP2, leading to proteasomal degradation.</text>
</comment>
<comment type="disease" evidence="9 13">
    <disease id="DI-00762">
        <name>Microphthalmia, syndromic, 3</name>
        <acronym>MCOPS3</acronym>
        <description>A disease characterized by the rare association of malformations including uni- or bilateral anophthalmia or microphthalmia, and esophageal atresia with trachoesophageal fistula. Microphthalmia is a disorder of eye formation, ranging from small size of a single eye to complete bilateral absence of ocular tissues (anophthalmia). In many cases, microphthalmia/anophthalmia occurs in association with syndromes that include non-ocular abnormalities.</description>
        <dbReference type="MIM" id="206900"/>
    </disease>
    <text>The disease is caused by variants affecting the gene represented in this entry.</text>
</comment>
<comment type="biotechnology">
    <text evidence="10">POU5F1/OCT4, SOX2, MYC/c-Myc and KLF4 are the four Yamanaka factors. When combined, these factors are sufficient to reprogram differentiated cells to an embryonic-like state designated iPS (induced pluripotent stem) cells. iPS cells exhibit the morphology and growth properties of ES cells and express ES cell marker genes.</text>
</comment>
<comment type="sequence caution" evidence="17">
    <conflict type="erroneous initiation">
        <sequence resource="EMBL-CDS" id="AAA35997"/>
    </conflict>
    <text>Extended N-terminus.</text>
</comment>
<comment type="sequence caution" evidence="17">
    <conflict type="erroneous initiation">
        <sequence resource="EMBL-CDS" id="CAA83435"/>
    </conflict>
    <text>Extended N-terminus.</text>
</comment>
<comment type="online information" name="Wikipedia">
    <link uri="https://en.wikipedia.org/wiki/Sox2"/>
    <text>Sox2 entry</text>
</comment>
<comment type="online information" name="Atlas of Genetics and Cytogenetics in Oncology and Haematology">
    <link uri="https://atlasgeneticsoncology.org/gene/44064/SOX2"/>
</comment>
<keyword id="KW-0002">3D-structure</keyword>
<keyword id="KW-0010">Activator</keyword>
<keyword id="KW-0963">Cytoplasm</keyword>
<keyword id="KW-0217">Developmental protein</keyword>
<keyword id="KW-0225">Disease variant</keyword>
<keyword id="KW-0238">DNA-binding</keyword>
<keyword id="KW-1017">Isopeptide bond</keyword>
<keyword id="KW-0488">Methylation</keyword>
<keyword id="KW-1013">Microphthalmia</keyword>
<keyword id="KW-0539">Nucleus</keyword>
<keyword id="KW-0597">Phosphoprotein</keyword>
<keyword id="KW-1267">Proteomics identification</keyword>
<keyword id="KW-1185">Reference proteome</keyword>
<keyword id="KW-0804">Transcription</keyword>
<keyword id="KW-0805">Transcription regulation</keyword>
<keyword id="KW-0832">Ubl conjugation</keyword>
<dbReference type="EMBL" id="Z31560">
    <property type="protein sequence ID" value="CAA83435.1"/>
    <property type="status" value="ALT_INIT"/>
    <property type="molecule type" value="mRNA"/>
</dbReference>
<dbReference type="EMBL" id="L07335">
    <property type="protein sequence ID" value="AAA35997.1"/>
    <property type="status" value="ALT_INIT"/>
    <property type="molecule type" value="mRNA"/>
</dbReference>
<dbReference type="EMBL" id="BC013923">
    <property type="protein sequence ID" value="AAH13923.1"/>
    <property type="molecule type" value="mRNA"/>
</dbReference>
<dbReference type="CCDS" id="CCDS3239.1"/>
<dbReference type="RefSeq" id="NP_003097.1">
    <property type="nucleotide sequence ID" value="NM_003106.4"/>
</dbReference>
<dbReference type="PDB" id="1O4X">
    <property type="method" value="NMR"/>
    <property type="chains" value="B=39-121"/>
</dbReference>
<dbReference type="PDB" id="2LE4">
    <property type="method" value="NMR"/>
    <property type="chains" value="A=39-118"/>
</dbReference>
<dbReference type="PDB" id="6T7B">
    <property type="method" value="EM"/>
    <property type="resolution" value="5.10 A"/>
    <property type="chains" value="K=36-121"/>
</dbReference>
<dbReference type="PDB" id="6T90">
    <property type="method" value="EM"/>
    <property type="resolution" value="3.05 A"/>
    <property type="chains" value="L=37-118"/>
</dbReference>
<dbReference type="PDB" id="6WX7">
    <property type="method" value="X-ray"/>
    <property type="resolution" value="2.70 A"/>
    <property type="chains" value="B=39-127"/>
</dbReference>
<dbReference type="PDB" id="6WX8">
    <property type="method" value="X-ray"/>
    <property type="resolution" value="2.30 A"/>
    <property type="chains" value="B/D=39-127"/>
</dbReference>
<dbReference type="PDB" id="6WX9">
    <property type="method" value="X-ray"/>
    <property type="resolution" value="2.80 A"/>
    <property type="chains" value="B=39-127"/>
</dbReference>
<dbReference type="PDB" id="6YOV">
    <property type="method" value="EM"/>
    <property type="resolution" value="3.42 A"/>
    <property type="chains" value="L=37-118"/>
</dbReference>
<dbReference type="PDBsum" id="1O4X"/>
<dbReference type="PDBsum" id="2LE4"/>
<dbReference type="PDBsum" id="6T7B"/>
<dbReference type="PDBsum" id="6T90"/>
<dbReference type="PDBsum" id="6WX7"/>
<dbReference type="PDBsum" id="6WX8"/>
<dbReference type="PDBsum" id="6WX9"/>
<dbReference type="PDBsum" id="6YOV"/>
<dbReference type="BMRB" id="P48431"/>
<dbReference type="EMDB" id="EMD-10392"/>
<dbReference type="EMDB" id="EMD-10406"/>
<dbReference type="EMDB" id="EMD-10864"/>
<dbReference type="SMR" id="P48431"/>
<dbReference type="BioGRID" id="112540">
    <property type="interactions" value="1364"/>
</dbReference>
<dbReference type="CORUM" id="P48431"/>
<dbReference type="DIP" id="DIP-59913N"/>
<dbReference type="FunCoup" id="P48431">
    <property type="interactions" value="1519"/>
</dbReference>
<dbReference type="IntAct" id="P48431">
    <property type="interactions" value="493"/>
</dbReference>
<dbReference type="MINT" id="P48431"/>
<dbReference type="STRING" id="9606.ENSP00000323588"/>
<dbReference type="GlyCosmos" id="P48431">
    <property type="glycosylation" value="1 site, 1 glycan"/>
</dbReference>
<dbReference type="GlyGen" id="P48431">
    <property type="glycosylation" value="9 sites, 1 N-linked glycan (1 site), 1 O-linked glycan (7 sites)"/>
</dbReference>
<dbReference type="iPTMnet" id="P48431"/>
<dbReference type="PhosphoSitePlus" id="P48431"/>
<dbReference type="BioMuta" id="SOX2"/>
<dbReference type="DMDM" id="1351091"/>
<dbReference type="jPOST" id="P48431"/>
<dbReference type="MassIVE" id="P48431"/>
<dbReference type="PaxDb" id="9606-ENSP00000323588"/>
<dbReference type="PeptideAtlas" id="P48431"/>
<dbReference type="ProteomicsDB" id="55888"/>
<dbReference type="Pumba" id="P48431"/>
<dbReference type="Antibodypedia" id="3488">
    <property type="antibodies" value="1822 antibodies from 54 providers"/>
</dbReference>
<dbReference type="DNASU" id="6657"/>
<dbReference type="Ensembl" id="ENST00000325404.3">
    <property type="protein sequence ID" value="ENSP00000323588.1"/>
    <property type="gene ID" value="ENSG00000181449.4"/>
</dbReference>
<dbReference type="GeneID" id="6657"/>
<dbReference type="KEGG" id="hsa:6657"/>
<dbReference type="MANE-Select" id="ENST00000325404.3">
    <property type="protein sequence ID" value="ENSP00000323588.1"/>
    <property type="RefSeq nucleotide sequence ID" value="NM_003106.4"/>
    <property type="RefSeq protein sequence ID" value="NP_003097.1"/>
</dbReference>
<dbReference type="UCSC" id="uc003fkx.4">
    <property type="organism name" value="human"/>
</dbReference>
<dbReference type="AGR" id="HGNC:11195"/>
<dbReference type="CTD" id="6657"/>
<dbReference type="DisGeNET" id="6657"/>
<dbReference type="GeneCards" id="SOX2"/>
<dbReference type="GeneReviews" id="SOX2"/>
<dbReference type="HGNC" id="HGNC:11195">
    <property type="gene designation" value="SOX2"/>
</dbReference>
<dbReference type="HPA" id="ENSG00000181449">
    <property type="expression patterns" value="Tissue enhanced (brain, esophagus)"/>
</dbReference>
<dbReference type="MalaCards" id="SOX2"/>
<dbReference type="MIM" id="184429">
    <property type="type" value="gene"/>
</dbReference>
<dbReference type="MIM" id="206900">
    <property type="type" value="phenotype"/>
</dbReference>
<dbReference type="neXtProt" id="NX_P48431"/>
<dbReference type="OpenTargets" id="ENSG00000181449"/>
<dbReference type="Orphanet" id="77298">
    <property type="disease" value="Anophthalmia/microphthalmia-esophageal atresia syndrome"/>
</dbReference>
<dbReference type="Orphanet" id="98938">
    <property type="disease" value="Colobomatous microphthalmia"/>
</dbReference>
<dbReference type="Orphanet" id="35612">
    <property type="disease" value="Nanophthalmos"/>
</dbReference>
<dbReference type="Orphanet" id="3157">
    <property type="disease" value="Septo-optic dysplasia spectrum"/>
</dbReference>
<dbReference type="PharmGKB" id="PA36032"/>
<dbReference type="VEuPathDB" id="HostDB:ENSG00000181449"/>
<dbReference type="eggNOG" id="KOG0527">
    <property type="taxonomic scope" value="Eukaryota"/>
</dbReference>
<dbReference type="GeneTree" id="ENSGT00940000160614"/>
<dbReference type="HOGENOM" id="CLU_021123_0_0_1"/>
<dbReference type="InParanoid" id="P48431"/>
<dbReference type="OMA" id="MYNMMES"/>
<dbReference type="OrthoDB" id="6247875at2759"/>
<dbReference type="PAN-GO" id="P48431">
    <property type="GO annotations" value="9 GO annotations based on evolutionary models"/>
</dbReference>
<dbReference type="PhylomeDB" id="P48431"/>
<dbReference type="TreeFam" id="TF351735"/>
<dbReference type="PathwayCommons" id="P48431"/>
<dbReference type="Reactome" id="R-HSA-2892245">
    <property type="pathway name" value="POU5F1 (OCT4), SOX2, NANOG repress genes related to differentiation"/>
</dbReference>
<dbReference type="Reactome" id="R-HSA-2892247">
    <property type="pathway name" value="POU5F1 (OCT4), SOX2, NANOG activate genes related to proliferation"/>
</dbReference>
<dbReference type="Reactome" id="R-HSA-3769402">
    <property type="pathway name" value="Deactivation of the beta-catenin transactivating complex"/>
</dbReference>
<dbReference type="Reactome" id="R-HSA-452723">
    <property type="pathway name" value="Transcriptional regulation of pluripotent stem cells"/>
</dbReference>
<dbReference type="Reactome" id="R-HSA-6785807">
    <property type="pathway name" value="Interleukin-4 and Interleukin-13 signaling"/>
</dbReference>
<dbReference type="Reactome" id="R-HSA-8986944">
    <property type="pathway name" value="Transcriptional Regulation by MECP2"/>
</dbReference>
<dbReference type="Reactome" id="R-HSA-9754189">
    <property type="pathway name" value="Germ layer formation at gastrulation"/>
</dbReference>
<dbReference type="Reactome" id="R-HSA-9823739">
    <property type="pathway name" value="Formation of the anterior neural plate"/>
</dbReference>
<dbReference type="Reactome" id="R-HSA-9832991">
    <property type="pathway name" value="Formation of the posterior neural plate"/>
</dbReference>
<dbReference type="Reactome" id="R-HSA-9834899">
    <property type="pathway name" value="Specification of the neural plate border"/>
</dbReference>
<dbReference type="Reactome" id="R-HSA-9856649">
    <property type="pathway name" value="Transcriptional and post-translational regulation of MITF-M expression and activity"/>
</dbReference>
<dbReference type="Reactome" id="R-HSA-9926550">
    <property type="pathway name" value="Regulation of MITF-M-dependent genes involved in extracellular matrix, focal adhesion and epithelial-to-mesenchymal transition"/>
</dbReference>
<dbReference type="SignaLink" id="P48431"/>
<dbReference type="SIGNOR" id="P48431"/>
<dbReference type="BioGRID-ORCS" id="6657">
    <property type="hits" value="60 hits in 1179 CRISPR screens"/>
</dbReference>
<dbReference type="CD-CODE" id="50D32664">
    <property type="entry name" value="Synthetic Condensate 000192"/>
</dbReference>
<dbReference type="CD-CODE" id="CF22E771">
    <property type="entry name" value="Synthetic Condensate 000181"/>
</dbReference>
<dbReference type="EvolutionaryTrace" id="P48431"/>
<dbReference type="GeneWiki" id="SOX2"/>
<dbReference type="GenomeRNAi" id="6657"/>
<dbReference type="Pharos" id="P48431">
    <property type="development level" value="Tbio"/>
</dbReference>
<dbReference type="PRO" id="PR:P48431"/>
<dbReference type="Proteomes" id="UP000005640">
    <property type="component" value="Chromosome 3"/>
</dbReference>
<dbReference type="RNAct" id="P48431">
    <property type="molecule type" value="protein"/>
</dbReference>
<dbReference type="Bgee" id="ENSG00000181449">
    <property type="expression patterns" value="Expressed in ventricular zone and 152 other cell types or tissues"/>
</dbReference>
<dbReference type="ExpressionAtlas" id="P48431">
    <property type="expression patterns" value="baseline and differential"/>
</dbReference>
<dbReference type="GO" id="GO:0000785">
    <property type="term" value="C:chromatin"/>
    <property type="evidence" value="ECO:0000247"/>
    <property type="project" value="NTNU_SB"/>
</dbReference>
<dbReference type="GO" id="GO:0005737">
    <property type="term" value="C:cytoplasm"/>
    <property type="evidence" value="ECO:0000314"/>
    <property type="project" value="UniProtKB"/>
</dbReference>
<dbReference type="GO" id="GO:0005829">
    <property type="term" value="C:cytosol"/>
    <property type="evidence" value="ECO:0000314"/>
    <property type="project" value="UniProtKB"/>
</dbReference>
<dbReference type="GO" id="GO:0016607">
    <property type="term" value="C:nuclear speck"/>
    <property type="evidence" value="ECO:0007669"/>
    <property type="project" value="UniProtKB-SubCell"/>
</dbReference>
<dbReference type="GO" id="GO:0005654">
    <property type="term" value="C:nucleoplasm"/>
    <property type="evidence" value="ECO:0000314"/>
    <property type="project" value="HPA"/>
</dbReference>
<dbReference type="GO" id="GO:0005634">
    <property type="term" value="C:nucleus"/>
    <property type="evidence" value="ECO:0000314"/>
    <property type="project" value="UniProtKB"/>
</dbReference>
<dbReference type="GO" id="GO:0005667">
    <property type="term" value="C:transcription regulator complex"/>
    <property type="evidence" value="ECO:0000304"/>
    <property type="project" value="BHF-UCL"/>
</dbReference>
<dbReference type="GO" id="GO:0003677">
    <property type="term" value="F:DNA binding"/>
    <property type="evidence" value="ECO:0000314"/>
    <property type="project" value="UniProtKB"/>
</dbReference>
<dbReference type="GO" id="GO:0001228">
    <property type="term" value="F:DNA-binding transcription activator activity, RNA polymerase II-specific"/>
    <property type="evidence" value="ECO:0000318"/>
    <property type="project" value="GO_Central"/>
</dbReference>
<dbReference type="GO" id="GO:0003700">
    <property type="term" value="F:DNA-binding transcription factor activity"/>
    <property type="evidence" value="ECO:0000314"/>
    <property type="project" value="UniProtKB"/>
</dbReference>
<dbReference type="GO" id="GO:0000981">
    <property type="term" value="F:DNA-binding transcription factor activity, RNA polymerase II-specific"/>
    <property type="evidence" value="ECO:0000247"/>
    <property type="project" value="NTNU_SB"/>
</dbReference>
<dbReference type="GO" id="GO:0035198">
    <property type="term" value="F:miRNA binding"/>
    <property type="evidence" value="ECO:0000314"/>
    <property type="project" value="UniProtKB"/>
</dbReference>
<dbReference type="GO" id="GO:0000978">
    <property type="term" value="F:RNA polymerase II cis-regulatory region sequence-specific DNA binding"/>
    <property type="evidence" value="ECO:0000318"/>
    <property type="project" value="GO_Central"/>
</dbReference>
<dbReference type="GO" id="GO:0043565">
    <property type="term" value="F:sequence-specific DNA binding"/>
    <property type="evidence" value="ECO:0000314"/>
    <property type="project" value="MGI"/>
</dbReference>
<dbReference type="GO" id="GO:0000976">
    <property type="term" value="F:transcription cis-regulatory region binding"/>
    <property type="evidence" value="ECO:0000314"/>
    <property type="project" value="UniProtKB"/>
</dbReference>
<dbReference type="GO" id="GO:0021984">
    <property type="term" value="P:adenohypophysis development"/>
    <property type="evidence" value="ECO:0007669"/>
    <property type="project" value="Ensembl"/>
</dbReference>
<dbReference type="GO" id="GO:0007420">
    <property type="term" value="P:brain development"/>
    <property type="evidence" value="ECO:0000318"/>
    <property type="project" value="GO_Central"/>
</dbReference>
<dbReference type="GO" id="GO:0006325">
    <property type="term" value="P:chromatin organization"/>
    <property type="evidence" value="ECO:0000303"/>
    <property type="project" value="UniProtKB"/>
</dbReference>
<dbReference type="GO" id="GO:0001714">
    <property type="term" value="P:endodermal cell fate specification"/>
    <property type="evidence" value="ECO:0000314"/>
    <property type="project" value="MGI"/>
</dbReference>
<dbReference type="GO" id="GO:0001654">
    <property type="term" value="P:eye development"/>
    <property type="evidence" value="ECO:0000270"/>
    <property type="project" value="UniProtKB"/>
</dbReference>
<dbReference type="GO" id="GO:0030900">
    <property type="term" value="P:forebrain development"/>
    <property type="evidence" value="ECO:0000270"/>
    <property type="project" value="UniProtKB"/>
</dbReference>
<dbReference type="GO" id="GO:0021781">
    <property type="term" value="P:glial cell fate commitment"/>
    <property type="evidence" value="ECO:0000303"/>
    <property type="project" value="UniProtKB"/>
</dbReference>
<dbReference type="GO" id="GO:0048839">
    <property type="term" value="P:inner ear development"/>
    <property type="evidence" value="ECO:0000270"/>
    <property type="project" value="UniProtKB"/>
</dbReference>
<dbReference type="GO" id="GO:0090090">
    <property type="term" value="P:negative regulation of canonical Wnt signaling pathway"/>
    <property type="evidence" value="ECO:0000314"/>
    <property type="project" value="UniProtKB"/>
</dbReference>
<dbReference type="GO" id="GO:1902807">
    <property type="term" value="P:negative regulation of cell cycle G1/S phase transition"/>
    <property type="evidence" value="ECO:0000314"/>
    <property type="project" value="UniProtKB"/>
</dbReference>
<dbReference type="GO" id="GO:0045665">
    <property type="term" value="P:negative regulation of neuron differentiation"/>
    <property type="evidence" value="ECO:0000250"/>
    <property type="project" value="UniProtKB"/>
</dbReference>
<dbReference type="GO" id="GO:0000122">
    <property type="term" value="P:negative regulation of transcription by RNA polymerase II"/>
    <property type="evidence" value="ECO:0000250"/>
    <property type="project" value="UniProtKB"/>
</dbReference>
<dbReference type="GO" id="GO:0030182">
    <property type="term" value="P:neuron differentiation"/>
    <property type="evidence" value="ECO:0000318"/>
    <property type="project" value="GO_Central"/>
</dbReference>
<dbReference type="GO" id="GO:0097150">
    <property type="term" value="P:neuronal stem cell population maintenance"/>
    <property type="evidence" value="ECO:0000250"/>
    <property type="project" value="UniProtKB"/>
</dbReference>
<dbReference type="GO" id="GO:0001649">
    <property type="term" value="P:osteoblast differentiation"/>
    <property type="evidence" value="ECO:0000314"/>
    <property type="project" value="UniProtKB"/>
</dbReference>
<dbReference type="GO" id="GO:0021983">
    <property type="term" value="P:pituitary gland development"/>
    <property type="evidence" value="ECO:0000270"/>
    <property type="project" value="UniProtKB"/>
</dbReference>
<dbReference type="GO" id="GO:0045597">
    <property type="term" value="P:positive regulation of cell differentiation"/>
    <property type="evidence" value="ECO:0007669"/>
    <property type="project" value="Ensembl"/>
</dbReference>
<dbReference type="GO" id="GO:0022409">
    <property type="term" value="P:positive regulation of cell-cell adhesion"/>
    <property type="evidence" value="ECO:0007669"/>
    <property type="project" value="Ensembl"/>
</dbReference>
<dbReference type="GO" id="GO:0045893">
    <property type="term" value="P:positive regulation of DNA-templated transcription"/>
    <property type="evidence" value="ECO:0000314"/>
    <property type="project" value="UniProtKB"/>
</dbReference>
<dbReference type="GO" id="GO:0043410">
    <property type="term" value="P:positive regulation of MAPK cascade"/>
    <property type="evidence" value="ECO:0000314"/>
    <property type="project" value="UniProtKB"/>
</dbReference>
<dbReference type="GO" id="GO:0045944">
    <property type="term" value="P:positive regulation of transcription by RNA polymerase II"/>
    <property type="evidence" value="ECO:0000314"/>
    <property type="project" value="UniProtKB"/>
</dbReference>
<dbReference type="GO" id="GO:0006355">
    <property type="term" value="P:regulation of DNA-templated transcription"/>
    <property type="evidence" value="ECO:0000314"/>
    <property type="project" value="HGNC-UCL"/>
</dbReference>
<dbReference type="GO" id="GO:0010468">
    <property type="term" value="P:regulation of gene expression"/>
    <property type="evidence" value="ECO:0000315"/>
    <property type="project" value="UniProtKB"/>
</dbReference>
<dbReference type="GO" id="GO:1904520">
    <property type="term" value="P:regulation of myofibroblast cell apoptotic process"/>
    <property type="evidence" value="ECO:0007669"/>
    <property type="project" value="Ensembl"/>
</dbReference>
<dbReference type="GO" id="GO:0070848">
    <property type="term" value="P:response to growth factor"/>
    <property type="evidence" value="ECO:0000314"/>
    <property type="project" value="UniProtKB"/>
</dbReference>
<dbReference type="GO" id="GO:0090649">
    <property type="term" value="P:response to oxygen-glucose deprivation"/>
    <property type="evidence" value="ECO:0007669"/>
    <property type="project" value="Ensembl"/>
</dbReference>
<dbReference type="GO" id="GO:0009611">
    <property type="term" value="P:response to wounding"/>
    <property type="evidence" value="ECO:0000270"/>
    <property type="project" value="UniProtKB"/>
</dbReference>
<dbReference type="GO" id="GO:0035019">
    <property type="term" value="P:somatic stem cell population maintenance"/>
    <property type="evidence" value="ECO:0000314"/>
    <property type="project" value="UniProtKB"/>
</dbReference>
<dbReference type="GO" id="GO:0042246">
    <property type="term" value="P:tissue regeneration"/>
    <property type="evidence" value="ECO:0007669"/>
    <property type="project" value="Ensembl"/>
</dbReference>
<dbReference type="CDD" id="cd01388">
    <property type="entry name" value="HMG-box_SoxB"/>
    <property type="match status" value="1"/>
</dbReference>
<dbReference type="FunFam" id="1.10.30.10:FF:000002">
    <property type="entry name" value="transcription factor Sox-2"/>
    <property type="match status" value="1"/>
</dbReference>
<dbReference type="Gene3D" id="1.10.30.10">
    <property type="entry name" value="High mobility group box domain"/>
    <property type="match status" value="1"/>
</dbReference>
<dbReference type="IDEAL" id="IID00626"/>
<dbReference type="InterPro" id="IPR009071">
    <property type="entry name" value="HMG_box_dom"/>
</dbReference>
<dbReference type="InterPro" id="IPR036910">
    <property type="entry name" value="HMG_box_dom_sf"/>
</dbReference>
<dbReference type="InterPro" id="IPR022097">
    <property type="entry name" value="SOX_fam"/>
</dbReference>
<dbReference type="InterPro" id="IPR050140">
    <property type="entry name" value="SRY-related_HMG-box_TF-like"/>
</dbReference>
<dbReference type="PANTHER" id="PTHR10270">
    <property type="entry name" value="SOX TRANSCRIPTION FACTOR"/>
    <property type="match status" value="1"/>
</dbReference>
<dbReference type="PANTHER" id="PTHR10270:SF231">
    <property type="entry name" value="TRANSCRIPTION FACTOR SOX-2"/>
    <property type="match status" value="1"/>
</dbReference>
<dbReference type="Pfam" id="PF00505">
    <property type="entry name" value="HMG_box"/>
    <property type="match status" value="1"/>
</dbReference>
<dbReference type="Pfam" id="PF12336">
    <property type="entry name" value="SOXp"/>
    <property type="match status" value="1"/>
</dbReference>
<dbReference type="SMART" id="SM00398">
    <property type="entry name" value="HMG"/>
    <property type="match status" value="1"/>
</dbReference>
<dbReference type="SUPFAM" id="SSF47095">
    <property type="entry name" value="HMG-box"/>
    <property type="match status" value="1"/>
</dbReference>
<dbReference type="PROSITE" id="PS50118">
    <property type="entry name" value="HMG_BOX_2"/>
    <property type="match status" value="1"/>
</dbReference>
<name>SOX2_HUMAN</name>
<feature type="chain" id="PRO_0000048715" description="Transcription factor SOX-2">
    <location>
        <begin position="1"/>
        <end position="317"/>
    </location>
</feature>
<feature type="DNA-binding region" description="HMG box" evidence="7">
    <location>
        <begin position="41"/>
        <end position="109"/>
    </location>
</feature>
<feature type="region of interest" description="Disordered" evidence="8">
    <location>
        <begin position="1"/>
        <end position="43"/>
    </location>
</feature>
<feature type="region of interest" description="Disordered" evidence="8">
    <location>
        <begin position="243"/>
        <end position="266"/>
    </location>
</feature>
<feature type="region of interest" description="Disordered" evidence="8">
    <location>
        <begin position="297"/>
        <end position="317"/>
    </location>
</feature>
<feature type="short sequence motif" description="9aaTAD" evidence="2">
    <location>
        <begin position="272"/>
        <end position="280"/>
    </location>
</feature>
<feature type="compositionally biased region" description="Low complexity" evidence="8">
    <location>
        <begin position="246"/>
        <end position="261"/>
    </location>
</feature>
<feature type="modified residue" description="N6-methyllysine" evidence="14">
    <location>
        <position position="42"/>
    </location>
</feature>
<feature type="modified residue" description="N6-methyllysine" evidence="14">
    <location>
        <position position="117"/>
    </location>
</feature>
<feature type="modified residue" description="Phosphoserine" evidence="18">
    <location>
        <position position="251"/>
    </location>
</feature>
<feature type="cross-link" description="Glycyl lysine isopeptide (Lys-Gly) (interchain with G-Cter in SUMO)" evidence="1">
    <location>
        <position position="245"/>
    </location>
</feature>
<feature type="sequence variant" id="VAR_075627" description="In MCOPS3; uncertain significance." evidence="13">
    <original>W</original>
    <variation>R</variation>
    <location>
        <position position="51"/>
    </location>
</feature>
<feature type="sequence variant" id="VAR_075628" description="In MCOPS3; uncertain significance; dbSNP:rs104893805." evidence="13">
    <original>R</original>
    <variation>P</variation>
    <location>
        <position position="74"/>
    </location>
</feature>
<feature type="sequence variant" id="VAR_075629" description="In MCOPS3; uncertain significance." evidence="13">
    <original>W</original>
    <variation>S</variation>
    <location>
        <position position="79"/>
    </location>
</feature>
<feature type="mutagenesis site" description="In mt1; reduced nuclear import; when associated with 56-A--A-58. In mt1.2; reduced nuclear import; when associated with 56-A--A-58 and 113-A--A-115." evidence="11">
    <original>KR</original>
    <variation>AA</variation>
    <location>
        <begin position="42"/>
        <end position="43"/>
    </location>
</feature>
<feature type="mutagenesis site" description="Loss of interaction with L3MBTL3. Loss of ubiquitination by the CRL4-DCAF5 E3 ubiquitin ligase complex. Loss of interaction with PHF20L1; when associated with R-117." evidence="14 15">
    <original>K</original>
    <variation>R</variation>
    <location>
        <position position="42"/>
    </location>
</feature>
<feature type="mutagenesis site" description="In mt1; reduced nuclear import; when associated with 56-A--A-58. In mt1.2; reduced nuclear import; when associated with 42-A-A-43 and 113-A--A-115." evidence="11">
    <original>RRK</original>
    <variation>AAA</variation>
    <location>
        <begin position="56"/>
        <end position="58"/>
    </location>
</feature>
<feature type="mutagenesis site" description="In mt2; reduced nuclear import. In mt1.2; reduced nuclear import; when associated with 42-A-A-43 and 56-A--A-58." evidence="11">
    <original>RRK</original>
    <variation>AAA</variation>
    <location>
        <begin position="113"/>
        <end position="115"/>
    </location>
</feature>
<feature type="mutagenesis site" description="Loss of interaction with PHF20L1; when associated with R-42." evidence="14">
    <original>K</original>
    <variation>R</variation>
    <location>
        <position position="117"/>
    </location>
</feature>
<feature type="helix" evidence="19">
    <location>
        <begin position="47"/>
        <end position="62"/>
    </location>
</feature>
<feature type="helix" evidence="19">
    <location>
        <begin position="68"/>
        <end position="79"/>
    </location>
</feature>
<feature type="helix" evidence="19">
    <location>
        <begin position="84"/>
        <end position="103"/>
    </location>
</feature>
<feature type="helix" evidence="19">
    <location>
        <begin position="108"/>
        <end position="110"/>
    </location>
</feature>
<protein>
    <recommendedName>
        <fullName>Transcription factor SOX-2</fullName>
    </recommendedName>
</protein>
<accession>P48431</accession>
<accession>Q14537</accession>
<evidence type="ECO:0000250" key="1"/>
<evidence type="ECO:0000250" key="2">
    <source>
        <dbReference type="UniProtKB" id="P41225"/>
    </source>
</evidence>
<evidence type="ECO:0000250" key="3">
    <source>
        <dbReference type="UniProtKB" id="P48430"/>
    </source>
</evidence>
<evidence type="ECO:0000250" key="4">
    <source>
        <dbReference type="UniProtKB" id="P48432"/>
    </source>
</evidence>
<evidence type="ECO:0000250" key="5">
    <source>
        <dbReference type="UniProtKB" id="Q05066"/>
    </source>
</evidence>
<evidence type="ECO:0000250" key="6">
    <source>
        <dbReference type="UniProtKB" id="Q05738"/>
    </source>
</evidence>
<evidence type="ECO:0000255" key="7">
    <source>
        <dbReference type="PROSITE-ProRule" id="PRU00267"/>
    </source>
</evidence>
<evidence type="ECO:0000256" key="8">
    <source>
        <dbReference type="SAM" id="MobiDB-lite"/>
    </source>
</evidence>
<evidence type="ECO:0000269" key="9">
    <source>
    </source>
</evidence>
<evidence type="ECO:0000269" key="10">
    <source>
    </source>
</evidence>
<evidence type="ECO:0000269" key="11">
    <source>
    </source>
</evidence>
<evidence type="ECO:0000269" key="12">
    <source>
    </source>
</evidence>
<evidence type="ECO:0000269" key="13">
    <source>
    </source>
</evidence>
<evidence type="ECO:0000269" key="14">
    <source>
    </source>
</evidence>
<evidence type="ECO:0000269" key="15">
    <source>
    </source>
</evidence>
<evidence type="ECO:0000269" key="16">
    <source>
    </source>
</evidence>
<evidence type="ECO:0000305" key="17"/>
<evidence type="ECO:0007744" key="18">
    <source>
    </source>
</evidence>
<evidence type="ECO:0007829" key="19">
    <source>
        <dbReference type="PDB" id="6WX8"/>
    </source>
</evidence>
<reference key="1">
    <citation type="journal article" date="1994" name="Mamm. Genome">
        <title>The cDNA sequence and chromosomal location of the human SOX2 gene.</title>
        <authorList>
            <person name="Stevanovic M."/>
            <person name="Zuffardi O."/>
            <person name="Collignon J."/>
            <person name="Lovell-Badge R."/>
            <person name="Goodfellow P."/>
        </authorList>
    </citation>
    <scope>NUCLEOTIDE SEQUENCE [MRNA]</scope>
    <source>
        <tissue>Fetal brain</tissue>
    </source>
</reference>
<reference key="2">
    <citation type="submission" date="1992-12" db="EMBL/GenBank/DDBJ databases">
        <authorList>
            <person name="Sadler L.A."/>
            <person name="Badzioch M.D."/>
            <person name="Wagner M."/>
            <person name="Graves K.A."/>
            <person name="Swaroop A."/>
            <person name="Yang-Feng T.L."/>
            <person name="Zheng K."/>
            <person name="Daiger S.P."/>
        </authorList>
    </citation>
    <scope>NUCLEOTIDE SEQUENCE [MRNA]</scope>
    <source>
        <tissue>Retina</tissue>
    </source>
</reference>
<reference key="3">
    <citation type="journal article" date="2004" name="Genome Res.">
        <title>The status, quality, and expansion of the NIH full-length cDNA project: the Mammalian Gene Collection (MGC).</title>
        <authorList>
            <consortium name="The MGC Project Team"/>
        </authorList>
    </citation>
    <scope>NUCLEOTIDE SEQUENCE [LARGE SCALE MRNA]</scope>
    <source>
        <tissue>Lung</tissue>
    </source>
</reference>
<reference key="4">
    <citation type="journal article" date="2003" name="Nat. Genet.">
        <title>Mutations in SOX2 cause anophthalmia.</title>
        <authorList>
            <person name="Fantes J."/>
            <person name="Ragge N.K."/>
            <person name="Lynch S.-A."/>
            <person name="McGill N.I."/>
            <person name="Collin J.R.O."/>
            <person name="Howard-Peebles P.N."/>
            <person name="Hayward C."/>
            <person name="Vivian A.J."/>
            <person name="Williamson K."/>
            <person name="van Heyningen V."/>
            <person name="FitzPatrick D.R."/>
        </authorList>
    </citation>
    <scope>INVOLVEMENT IN MCOPS3</scope>
</reference>
<reference key="5">
    <citation type="journal article" date="2007" name="Cell">
        <title>Induction of pluripotent stem cells from adult human fibroblasts by defined factors.</title>
        <authorList>
            <person name="Takahashi K."/>
            <person name="Tanabe K."/>
            <person name="Ohnuki M."/>
            <person name="Narita M."/>
            <person name="Ichisaka T."/>
            <person name="Tomoda K."/>
            <person name="Yamanaka S."/>
        </authorList>
    </citation>
    <scope>BIOTECHNOLOGY</scope>
    <scope>FUNCTION</scope>
</reference>
<reference key="6">
    <citation type="journal article" date="2009" name="J. Cell Biol.">
        <title>Exportin 4 mediates a novel nuclear import pathway for Sox family transcription factors.</title>
        <authorList>
            <person name="Gontan C."/>
            <person name="Guettler T."/>
            <person name="Engelen E."/>
            <person name="Demmers J."/>
            <person name="Fornerod M."/>
            <person name="Grosveld F.G."/>
            <person name="Tibboel D."/>
            <person name="Goerlich D."/>
            <person name="Poot R.A."/>
            <person name="Rottier R.J."/>
        </authorList>
    </citation>
    <scope>SUBCELLULAR LOCATION</scope>
    <scope>MUTAGENESIS OF 42-LYS-ARG-43; 56-ARG--LYS-58 AND 113-ARG--LYS-115</scope>
</reference>
<reference key="7">
    <citation type="journal article" date="2011" name="Nature">
        <title>Direct reprogramming of somatic cells is promoted by maternal transcription factor Glis1.</title>
        <authorList>
            <person name="Maekawa M."/>
            <person name="Yamaguchi K."/>
            <person name="Nakamura T."/>
            <person name="Shibukawa R."/>
            <person name="Kodanaka I."/>
            <person name="Ichisaka T."/>
            <person name="Kawamura Y."/>
            <person name="Mochizuki H."/>
            <person name="Goshima N."/>
            <person name="Yamanaka S."/>
        </authorList>
    </citation>
    <scope>INTERACTION WITH GLIS1</scope>
</reference>
<reference key="8">
    <citation type="journal article" date="2011" name="Sci. Signal.">
        <title>System-wide temporal characterization of the proteome and phosphoproteome of human embryonic stem cell differentiation.</title>
        <authorList>
            <person name="Rigbolt K.T."/>
            <person name="Prokhorova T.A."/>
            <person name="Akimov V."/>
            <person name="Henningsen J."/>
            <person name="Johansen P.T."/>
            <person name="Kratchmarova I."/>
            <person name="Kassem M."/>
            <person name="Mann M."/>
            <person name="Olsen J.V."/>
            <person name="Blagoev B."/>
        </authorList>
    </citation>
    <scope>PHOSPHORYLATION [LARGE SCALE ANALYSIS] AT SER-251</scope>
    <scope>IDENTIFICATION BY MASS SPECTROMETRY [LARGE SCALE ANALYSIS]</scope>
</reference>
<reference key="9">
    <citation type="journal article" date="2014" name="Clin. Genet.">
        <title>Molecular findings and clinical data in a cohort of 150 patients with anophthalmia/microphthalmia.</title>
        <authorList>
            <person name="Chassaing N."/>
            <person name="Causse A."/>
            <person name="Vigouroux A."/>
            <person name="Delahaye A."/>
            <person name="Alessandri J.L."/>
            <person name="Boespflug-Tanguy O."/>
            <person name="Boute-Benejean O."/>
            <person name="Dollfus H."/>
            <person name="Duban-Bedu B."/>
            <person name="Gilbert-Dussardier B."/>
            <person name="Giuliano F."/>
            <person name="Gonzales M."/>
            <person name="Holder-Espinasse M."/>
            <person name="Isidor B."/>
            <person name="Jacquemont M.L."/>
            <person name="Lacombe D."/>
            <person name="Martin-Coignard D."/>
            <person name="Mathieu-Dramard M."/>
            <person name="Odent S."/>
            <person name="Picone O."/>
            <person name="Pinson L."/>
            <person name="Quelin C."/>
            <person name="Sigaudy S."/>
            <person name="Toutain A."/>
            <person name="Thauvin-Robinet C."/>
            <person name="Kaplan J."/>
            <person name="Calvas P."/>
        </authorList>
    </citation>
    <scope>VARIANTS MCOPS3 ARG-51; PRO-74 AND SER-79</scope>
</reference>
<reference key="10">
    <citation type="journal article" date="2018" name="J. Biol. Chem.">
        <title>LSD1 demethylase and the methyl-binding protein PHF20L1 prevent SET7 methyltransferase-dependent proteolysis of the stem-cell protein SOX2.</title>
        <authorList>
            <person name="Zhang C."/>
            <person name="Hoang N."/>
            <person name="Leng F."/>
            <person name="Saxena L."/>
            <person name="Lee L."/>
            <person name="Alejo S."/>
            <person name="Qi D."/>
            <person name="Khal A."/>
            <person name="Sun H."/>
            <person name="Lu F."/>
            <person name="Zhang H."/>
        </authorList>
    </citation>
    <scope>METHYLATION AT LYS-42 AND LYS-117</scope>
    <scope>INTERACTION WITH PHF20L1</scope>
    <scope>MUTAGENESIS OF LYS-42 AND LYS-117</scope>
</reference>
<reference key="11">
    <citation type="journal article" date="2021" name="Nat. Commun.">
        <title>Competitive binding of E3 ligases TRIM26 and WWP2 controls SOX2 in glioblastoma.</title>
        <authorList>
            <person name="Mahlokozera T."/>
            <person name="Patel B."/>
            <person name="Chen H."/>
            <person name="Desouza P."/>
            <person name="Qu X."/>
            <person name="Mao D.D."/>
            <person name="Hafez D."/>
            <person name="Yang W."/>
            <person name="Taiwo R."/>
            <person name="Paturu M."/>
            <person name="Salehi A."/>
            <person name="Gujar A.D."/>
            <person name="Dunn G.P."/>
            <person name="Mosammaparast N."/>
            <person name="Petti A.A."/>
            <person name="Yano H."/>
            <person name="Kim A.H."/>
        </authorList>
    </citation>
    <scope>INTERACTION WITH TRIM26</scope>
    <scope>UBIQUITINATION BY WWP2</scope>
</reference>
<reference key="12">
    <citation type="journal article" date="2019" name="J. Biol. Chem.">
        <title>Proteolysis of methylated SOX2 protein is regulated by L3MBTL3 and CRL4-DCAF5 ubiquitin ligase.</title>
        <authorList>
            <person name="Zhang C."/>
            <person name="Leng F."/>
            <person name="Saxena L."/>
            <person name="Hoang N."/>
            <person name="Yu J."/>
            <person name="Alejo S."/>
            <person name="Lee L."/>
            <person name="Qi D."/>
            <person name="Lu F."/>
            <person name="Sun H."/>
            <person name="Zhang H."/>
        </authorList>
    </citation>
    <scope>INTERACTION WITH L3MBTL3 AND DCAF5</scope>
    <scope>MUTAGENESIS OF LYS-42</scope>
</reference>
<organism>
    <name type="scientific">Homo sapiens</name>
    <name type="common">Human</name>
    <dbReference type="NCBI Taxonomy" id="9606"/>
    <lineage>
        <taxon>Eukaryota</taxon>
        <taxon>Metazoa</taxon>
        <taxon>Chordata</taxon>
        <taxon>Craniata</taxon>
        <taxon>Vertebrata</taxon>
        <taxon>Euteleostomi</taxon>
        <taxon>Mammalia</taxon>
        <taxon>Eutheria</taxon>
        <taxon>Euarchontoglires</taxon>
        <taxon>Primates</taxon>
        <taxon>Haplorrhini</taxon>
        <taxon>Catarrhini</taxon>
        <taxon>Hominidae</taxon>
        <taxon>Homo</taxon>
    </lineage>
</organism>
<proteinExistence type="evidence at protein level"/>